<feature type="chain" id="PRO_1000215719" description="Pyridoxal 5'-phosphate synthase subunit PdxT">
    <location>
        <begin position="1"/>
        <end position="193"/>
    </location>
</feature>
<feature type="active site" description="Nucleophile" evidence="1">
    <location>
        <position position="80"/>
    </location>
</feature>
<feature type="active site" description="Charge relay system" evidence="1">
    <location>
        <position position="173"/>
    </location>
</feature>
<feature type="active site" description="Charge relay system" evidence="1">
    <location>
        <position position="175"/>
    </location>
</feature>
<feature type="binding site" evidence="1">
    <location>
        <begin position="48"/>
        <end position="50"/>
    </location>
    <ligand>
        <name>L-glutamine</name>
        <dbReference type="ChEBI" id="CHEBI:58359"/>
    </ligand>
</feature>
<feature type="binding site" evidence="1">
    <location>
        <position position="109"/>
    </location>
    <ligand>
        <name>L-glutamine</name>
        <dbReference type="ChEBI" id="CHEBI:58359"/>
    </ligand>
</feature>
<feature type="binding site" evidence="1">
    <location>
        <begin position="137"/>
        <end position="138"/>
    </location>
    <ligand>
        <name>L-glutamine</name>
        <dbReference type="ChEBI" id="CHEBI:58359"/>
    </ligand>
</feature>
<evidence type="ECO:0000255" key="1">
    <source>
        <dbReference type="HAMAP-Rule" id="MF_01615"/>
    </source>
</evidence>
<sequence length="193" mass="20536">MSPLVGVLALQGDVREHVAALKDSGAEALGVRRPEELGKVDGLVIPGGESTTMSNLLRVFELLDPLTERLRAGLPVYGSCAGMILLASEILDTRPDAVALGAIDMTVRRNAFGRQVDSFEGDLDFTGVDGAMHAVFIRAPWVERVGDDVEVLASAQGHPVAVRQGSALATAFHPEVTGDRRVHQLFVDMVRAG</sequence>
<comment type="function">
    <text evidence="1">Catalyzes the hydrolysis of glutamine to glutamate and ammonia as part of the biosynthesis of pyridoxal 5'-phosphate. The resulting ammonia molecule is channeled to the active site of PdxS.</text>
</comment>
<comment type="catalytic activity">
    <reaction evidence="1">
        <text>aldehydo-D-ribose 5-phosphate + D-glyceraldehyde 3-phosphate + L-glutamine = pyridoxal 5'-phosphate + L-glutamate + phosphate + 3 H2O + H(+)</text>
        <dbReference type="Rhea" id="RHEA:31507"/>
        <dbReference type="ChEBI" id="CHEBI:15377"/>
        <dbReference type="ChEBI" id="CHEBI:15378"/>
        <dbReference type="ChEBI" id="CHEBI:29985"/>
        <dbReference type="ChEBI" id="CHEBI:43474"/>
        <dbReference type="ChEBI" id="CHEBI:58273"/>
        <dbReference type="ChEBI" id="CHEBI:58359"/>
        <dbReference type="ChEBI" id="CHEBI:59776"/>
        <dbReference type="ChEBI" id="CHEBI:597326"/>
        <dbReference type="EC" id="4.3.3.6"/>
    </reaction>
</comment>
<comment type="catalytic activity">
    <reaction evidence="1">
        <text>L-glutamine + H2O = L-glutamate + NH4(+)</text>
        <dbReference type="Rhea" id="RHEA:15889"/>
        <dbReference type="ChEBI" id="CHEBI:15377"/>
        <dbReference type="ChEBI" id="CHEBI:28938"/>
        <dbReference type="ChEBI" id="CHEBI:29985"/>
        <dbReference type="ChEBI" id="CHEBI:58359"/>
        <dbReference type="EC" id="3.5.1.2"/>
    </reaction>
</comment>
<comment type="pathway">
    <text evidence="1">Cofactor biosynthesis; pyridoxal 5'-phosphate biosynthesis.</text>
</comment>
<comment type="subunit">
    <text evidence="1">In the presence of PdxS, forms a dodecamer of heterodimers. Only shows activity in the heterodimer.</text>
</comment>
<comment type="similarity">
    <text evidence="1">Belongs to the glutaminase PdxT/SNO family.</text>
</comment>
<organism>
    <name type="scientific">Mycobacteroides abscessus (strain ATCC 19977 / DSM 44196 / CCUG 20993 / CIP 104536 / JCM 13569 / NCTC 13031 / TMC 1543 / L948)</name>
    <name type="common">Mycobacterium abscessus</name>
    <dbReference type="NCBI Taxonomy" id="561007"/>
    <lineage>
        <taxon>Bacteria</taxon>
        <taxon>Bacillati</taxon>
        <taxon>Actinomycetota</taxon>
        <taxon>Actinomycetes</taxon>
        <taxon>Mycobacteriales</taxon>
        <taxon>Mycobacteriaceae</taxon>
        <taxon>Mycobacteroides</taxon>
        <taxon>Mycobacteroides abscessus</taxon>
    </lineage>
</organism>
<reference key="1">
    <citation type="journal article" date="2009" name="PLoS ONE">
        <title>Non mycobacterial virulence genes in the genome of the emerging pathogen Mycobacterium abscessus.</title>
        <authorList>
            <person name="Ripoll F."/>
            <person name="Pasek S."/>
            <person name="Schenowitz C."/>
            <person name="Dossat C."/>
            <person name="Barbe V."/>
            <person name="Rottman M."/>
            <person name="Macheras E."/>
            <person name="Heym B."/>
            <person name="Herrmann J.L."/>
            <person name="Daffe M."/>
            <person name="Brosch R."/>
            <person name="Risler J.L."/>
            <person name="Gaillard J.L."/>
        </authorList>
    </citation>
    <scope>NUCLEOTIDE SEQUENCE [LARGE SCALE GENOMIC DNA]</scope>
    <source>
        <strain>ATCC 19977 / DSM 44196 / CCUG 20993 / CIP 104536 / JCM 13569 / NCTC 13031 / TMC 1543 / L948</strain>
    </source>
</reference>
<protein>
    <recommendedName>
        <fullName evidence="1">Pyridoxal 5'-phosphate synthase subunit PdxT</fullName>
        <ecNumber evidence="1">4.3.3.6</ecNumber>
    </recommendedName>
    <alternativeName>
        <fullName evidence="1">Pdx2</fullName>
    </alternativeName>
    <alternativeName>
        <fullName evidence="1">Pyridoxal 5'-phosphate synthase glutaminase subunit</fullName>
        <ecNumber evidence="1">3.5.1.2</ecNumber>
    </alternativeName>
</protein>
<dbReference type="EC" id="4.3.3.6" evidence="1"/>
<dbReference type="EC" id="3.5.1.2" evidence="1"/>
<dbReference type="EMBL" id="CU458896">
    <property type="protein sequence ID" value="CAM62969.1"/>
    <property type="molecule type" value="Genomic_DNA"/>
</dbReference>
<dbReference type="SMR" id="B1MCJ8"/>
<dbReference type="MEROPS" id="C26.A32"/>
<dbReference type="KEGG" id="mab:MAB_2890c"/>
<dbReference type="UniPathway" id="UPA00245"/>
<dbReference type="Proteomes" id="UP000007137">
    <property type="component" value="Chromosome"/>
</dbReference>
<dbReference type="GO" id="GO:0005829">
    <property type="term" value="C:cytosol"/>
    <property type="evidence" value="ECO:0007669"/>
    <property type="project" value="TreeGrafter"/>
</dbReference>
<dbReference type="GO" id="GO:1903600">
    <property type="term" value="C:glutaminase complex"/>
    <property type="evidence" value="ECO:0007669"/>
    <property type="project" value="TreeGrafter"/>
</dbReference>
<dbReference type="GO" id="GO:0004359">
    <property type="term" value="F:glutaminase activity"/>
    <property type="evidence" value="ECO:0007669"/>
    <property type="project" value="UniProtKB-UniRule"/>
</dbReference>
<dbReference type="GO" id="GO:0036381">
    <property type="term" value="F:pyridoxal 5'-phosphate synthase (glutamine hydrolysing) activity"/>
    <property type="evidence" value="ECO:0007669"/>
    <property type="project" value="UniProtKB-UniRule"/>
</dbReference>
<dbReference type="GO" id="GO:0006543">
    <property type="term" value="P:glutamine catabolic process"/>
    <property type="evidence" value="ECO:0007669"/>
    <property type="project" value="UniProtKB-UniRule"/>
</dbReference>
<dbReference type="GO" id="GO:0042823">
    <property type="term" value="P:pyridoxal phosphate biosynthetic process"/>
    <property type="evidence" value="ECO:0007669"/>
    <property type="project" value="UniProtKB-UniRule"/>
</dbReference>
<dbReference type="GO" id="GO:0008614">
    <property type="term" value="P:pyridoxine metabolic process"/>
    <property type="evidence" value="ECO:0007669"/>
    <property type="project" value="TreeGrafter"/>
</dbReference>
<dbReference type="CDD" id="cd01749">
    <property type="entry name" value="GATase1_PB"/>
    <property type="match status" value="1"/>
</dbReference>
<dbReference type="FunFam" id="3.40.50.880:FF:000010">
    <property type="entry name" value="uncharacterized protein LOC100176842 isoform X2"/>
    <property type="match status" value="1"/>
</dbReference>
<dbReference type="Gene3D" id="3.40.50.880">
    <property type="match status" value="1"/>
</dbReference>
<dbReference type="HAMAP" id="MF_01615">
    <property type="entry name" value="PdxT"/>
    <property type="match status" value="1"/>
</dbReference>
<dbReference type="InterPro" id="IPR029062">
    <property type="entry name" value="Class_I_gatase-like"/>
</dbReference>
<dbReference type="InterPro" id="IPR002161">
    <property type="entry name" value="PdxT/SNO"/>
</dbReference>
<dbReference type="InterPro" id="IPR021196">
    <property type="entry name" value="PdxT/SNO_CS"/>
</dbReference>
<dbReference type="NCBIfam" id="TIGR03800">
    <property type="entry name" value="PLP_synth_Pdx2"/>
    <property type="match status" value="1"/>
</dbReference>
<dbReference type="PANTHER" id="PTHR31559">
    <property type="entry name" value="PYRIDOXAL 5'-PHOSPHATE SYNTHASE SUBUNIT SNO"/>
    <property type="match status" value="1"/>
</dbReference>
<dbReference type="PANTHER" id="PTHR31559:SF0">
    <property type="entry name" value="PYRIDOXAL 5'-PHOSPHATE SYNTHASE SUBUNIT SNO1-RELATED"/>
    <property type="match status" value="1"/>
</dbReference>
<dbReference type="Pfam" id="PF01174">
    <property type="entry name" value="SNO"/>
    <property type="match status" value="1"/>
</dbReference>
<dbReference type="PIRSF" id="PIRSF005639">
    <property type="entry name" value="Glut_amidoT_SNO"/>
    <property type="match status" value="1"/>
</dbReference>
<dbReference type="SUPFAM" id="SSF52317">
    <property type="entry name" value="Class I glutamine amidotransferase-like"/>
    <property type="match status" value="1"/>
</dbReference>
<dbReference type="PROSITE" id="PS01236">
    <property type="entry name" value="PDXT_SNO_1"/>
    <property type="match status" value="1"/>
</dbReference>
<dbReference type="PROSITE" id="PS51130">
    <property type="entry name" value="PDXT_SNO_2"/>
    <property type="match status" value="1"/>
</dbReference>
<name>PDXT_MYCA9</name>
<keyword id="KW-0315">Glutamine amidotransferase</keyword>
<keyword id="KW-0378">Hydrolase</keyword>
<keyword id="KW-0456">Lyase</keyword>
<keyword id="KW-0663">Pyridoxal phosphate</keyword>
<keyword id="KW-1185">Reference proteome</keyword>
<accession>B1MCJ8</accession>
<gene>
    <name evidence="1" type="primary">pdxT</name>
    <name type="ordered locus">MAB_2890c</name>
</gene>
<proteinExistence type="inferred from homology"/>